<comment type="function">
    <text evidence="3">Transposase-like protein that is essential for plant growth and development. May regulate global gene expression by recruiting other cellular factors.</text>
</comment>
<comment type="subunit">
    <text evidence="1">Homodimer.</text>
</comment>
<comment type="subcellular location">
    <subcellularLocation>
        <location evidence="1">Nucleus</location>
    </subcellularLocation>
</comment>
<comment type="sequence caution" evidence="4">
    <conflict type="erroneous initiation">
        <sequence resource="EMBL-CDS" id="BAF05116"/>
    </conflict>
    <text>Extended N-terminus.</text>
</comment>
<organism>
    <name type="scientific">Oryza sativa subsp. japonica</name>
    <name type="common">Rice</name>
    <dbReference type="NCBI Taxonomy" id="39947"/>
    <lineage>
        <taxon>Eukaryota</taxon>
        <taxon>Viridiplantae</taxon>
        <taxon>Streptophyta</taxon>
        <taxon>Embryophyta</taxon>
        <taxon>Tracheophyta</taxon>
        <taxon>Spermatophyta</taxon>
        <taxon>Magnoliopsida</taxon>
        <taxon>Liliopsida</taxon>
        <taxon>Poales</taxon>
        <taxon>Poaceae</taxon>
        <taxon>BOP clade</taxon>
        <taxon>Oryzoideae</taxon>
        <taxon>Oryzeae</taxon>
        <taxon>Oryzinae</taxon>
        <taxon>Oryza</taxon>
        <taxon>Oryza sativa</taxon>
    </lineage>
</organism>
<gene>
    <name type="ordered locus">Os01g0518400</name>
    <name type="ordered locus">LOC_Os01g33410</name>
    <name type="ORF">B1003B09</name>
    <name type="ORF">OsJ_02008</name>
</gene>
<keyword id="KW-0238">DNA-binding</keyword>
<keyword id="KW-0479">Metal-binding</keyword>
<keyword id="KW-0539">Nucleus</keyword>
<keyword id="KW-1185">Reference proteome</keyword>
<keyword id="KW-0804">Transcription</keyword>
<keyword id="KW-0805">Transcription regulation</keyword>
<keyword id="KW-0862">Zinc</keyword>
<keyword id="KW-0863">Zinc-finger</keyword>
<protein>
    <recommendedName>
        <fullName>Zinc finger BED domain-containing protein RICESLEEPER 4</fullName>
    </recommendedName>
    <alternativeName>
        <fullName>Transposase-like protein RICESLEEPER 4</fullName>
    </alternativeName>
</protein>
<sequence length="684" mass="77030">MDEMIPKPLISNDNEMMHGHGYTTMVHGNNEILNGNELAVHAEVIPSASTRGQKRKSAIWEHFTLVDVSDGCKRASCIHCNQSLAYSSGSKNSGTSHLTRHIAEWCRVLKDRQKSRRYTTYNSSNENASFDQERSCLRLAKMIILNDYPLHIVQQPAFLSFVDSVQPNFKMVDIGTIETEVYAIYLKEKDHLQQALANIPGRISLTVGSLTTNQSIRYISLAAQFIDSEWRLHRRVLKVMMAPWPQSENAVSRAIIKCLSDWNMQDKLFTITLEHDCSSHDIYSANLRNHLSGDNILMLKGQTFAVRCYANILNAVAHGVLASVHNVIYLIRESIKFIKADDAHENKFAEIAVELKITSNNSLCLDVTSEWNTTYLMLLAALDYRQVFTLLESYYDNYGTAPSTEDWKKVEAACGFLKLLYAFTLNIMSAEGNHQTANMFFHDAWVLQLELQNGMAHGDDVIRGIVIGIHEKFDKYWKDCNVVLAIAVAMDPRFKMKMVEFAYSKIYGPTDAAKYVKLVDDAILDLYKEYAAQPELLPLSPIYVDQVPADGLPFIETGGAPATASPSTAAAGAGLVDFDMYLSEVTTMGQPFKHELELYLEEALTQRTPDFDVLKWWQDNTLKYPTLSRMARDVLAIPMSTVGVGSSVFLPDNGSRSLDDYRSSLRPELVEALLCAKDWLQYSP</sequence>
<evidence type="ECO:0000250" key="1"/>
<evidence type="ECO:0000255" key="2">
    <source>
        <dbReference type="PROSITE-ProRule" id="PRU00027"/>
    </source>
</evidence>
<evidence type="ECO:0000269" key="3">
    <source>
    </source>
</evidence>
<evidence type="ECO:0000305" key="4"/>
<accession>Q0JMB2</accession>
<accession>A0A0P0V3C1</accession>
<accession>A2ZTS9</accession>
<name>RSLE4_ORYSJ</name>
<feature type="chain" id="PRO_0000429565" description="Zinc finger BED domain-containing protein RICESLEEPER 4">
    <location>
        <begin position="1"/>
        <end position="684"/>
    </location>
</feature>
<feature type="zinc finger region" description="BED-type" evidence="2">
    <location>
        <begin position="54"/>
        <end position="113"/>
    </location>
</feature>
<feature type="region of interest" description="HATC (Hobo-Ac-Tam3) domain">
    <location>
        <begin position="595"/>
        <end position="680"/>
    </location>
</feature>
<feature type="binding site" evidence="2">
    <location>
        <position position="77"/>
    </location>
    <ligand>
        <name>Zn(2+)</name>
        <dbReference type="ChEBI" id="CHEBI:29105"/>
    </ligand>
</feature>
<feature type="binding site" evidence="2">
    <location>
        <position position="80"/>
    </location>
    <ligand>
        <name>Zn(2+)</name>
        <dbReference type="ChEBI" id="CHEBI:29105"/>
    </ligand>
</feature>
<feature type="binding site" evidence="2">
    <location>
        <position position="101"/>
    </location>
    <ligand>
        <name>Zn(2+)</name>
        <dbReference type="ChEBI" id="CHEBI:29105"/>
    </ligand>
</feature>
<feature type="binding site" evidence="2">
    <location>
        <position position="106"/>
    </location>
    <ligand>
        <name>Zn(2+)</name>
        <dbReference type="ChEBI" id="CHEBI:29105"/>
    </ligand>
</feature>
<feature type="sequence conflict" description="In Ref. 6; AK069603." evidence="4" ref="6">
    <original>K</original>
    <variation>R</variation>
    <location>
        <position position="187"/>
    </location>
</feature>
<proteinExistence type="evidence at transcript level"/>
<reference key="1">
    <citation type="journal article" date="2002" name="Nature">
        <title>The genome sequence and structure of rice chromosome 1.</title>
        <authorList>
            <person name="Sasaki T."/>
            <person name="Matsumoto T."/>
            <person name="Yamamoto K."/>
            <person name="Sakata K."/>
            <person name="Baba T."/>
            <person name="Katayose Y."/>
            <person name="Wu J."/>
            <person name="Niimura Y."/>
            <person name="Cheng Z."/>
            <person name="Nagamura Y."/>
            <person name="Antonio B.A."/>
            <person name="Kanamori H."/>
            <person name="Hosokawa S."/>
            <person name="Masukawa M."/>
            <person name="Arikawa K."/>
            <person name="Chiden Y."/>
            <person name="Hayashi M."/>
            <person name="Okamoto M."/>
            <person name="Ando T."/>
            <person name="Aoki H."/>
            <person name="Arita K."/>
            <person name="Hamada M."/>
            <person name="Harada C."/>
            <person name="Hijishita S."/>
            <person name="Honda M."/>
            <person name="Ichikawa Y."/>
            <person name="Idonuma A."/>
            <person name="Iijima M."/>
            <person name="Ikeda M."/>
            <person name="Ikeno M."/>
            <person name="Ito S."/>
            <person name="Ito T."/>
            <person name="Ito Y."/>
            <person name="Ito Y."/>
            <person name="Iwabuchi A."/>
            <person name="Kamiya K."/>
            <person name="Karasawa W."/>
            <person name="Katagiri S."/>
            <person name="Kikuta A."/>
            <person name="Kobayashi N."/>
            <person name="Kono I."/>
            <person name="Machita K."/>
            <person name="Maehara T."/>
            <person name="Mizuno H."/>
            <person name="Mizubayashi T."/>
            <person name="Mukai Y."/>
            <person name="Nagasaki H."/>
            <person name="Nakashima M."/>
            <person name="Nakama Y."/>
            <person name="Nakamichi Y."/>
            <person name="Nakamura M."/>
            <person name="Namiki N."/>
            <person name="Negishi M."/>
            <person name="Ohta I."/>
            <person name="Ono N."/>
            <person name="Saji S."/>
            <person name="Sakai K."/>
            <person name="Shibata M."/>
            <person name="Shimokawa T."/>
            <person name="Shomura A."/>
            <person name="Song J."/>
            <person name="Takazaki Y."/>
            <person name="Terasawa K."/>
            <person name="Tsuji K."/>
            <person name="Waki K."/>
            <person name="Yamagata H."/>
            <person name="Yamane H."/>
            <person name="Yoshiki S."/>
            <person name="Yoshihara R."/>
            <person name="Yukawa K."/>
            <person name="Zhong H."/>
            <person name="Iwama H."/>
            <person name="Endo T."/>
            <person name="Ito H."/>
            <person name="Hahn J.H."/>
            <person name="Kim H.-I."/>
            <person name="Eun M.-Y."/>
            <person name="Yano M."/>
            <person name="Jiang J."/>
            <person name="Gojobori T."/>
        </authorList>
    </citation>
    <scope>NUCLEOTIDE SEQUENCE [LARGE SCALE GENOMIC DNA]</scope>
    <source>
        <strain>cv. Nipponbare</strain>
    </source>
</reference>
<reference key="2">
    <citation type="journal article" date="2005" name="Nature">
        <title>The map-based sequence of the rice genome.</title>
        <authorList>
            <consortium name="International rice genome sequencing project (IRGSP)"/>
        </authorList>
    </citation>
    <scope>NUCLEOTIDE SEQUENCE [LARGE SCALE GENOMIC DNA]</scope>
    <source>
        <strain>cv. Nipponbare</strain>
    </source>
</reference>
<reference key="3">
    <citation type="journal article" date="2008" name="Nucleic Acids Res.">
        <title>The rice annotation project database (RAP-DB): 2008 update.</title>
        <authorList>
            <consortium name="The rice annotation project (RAP)"/>
        </authorList>
    </citation>
    <scope>GENOME REANNOTATION</scope>
    <source>
        <strain>cv. Nipponbare</strain>
    </source>
</reference>
<reference key="4">
    <citation type="journal article" date="2013" name="Rice">
        <title>Improvement of the Oryza sativa Nipponbare reference genome using next generation sequence and optical map data.</title>
        <authorList>
            <person name="Kawahara Y."/>
            <person name="de la Bastide M."/>
            <person name="Hamilton J.P."/>
            <person name="Kanamori H."/>
            <person name="McCombie W.R."/>
            <person name="Ouyang S."/>
            <person name="Schwartz D.C."/>
            <person name="Tanaka T."/>
            <person name="Wu J."/>
            <person name="Zhou S."/>
            <person name="Childs K.L."/>
            <person name="Davidson R.M."/>
            <person name="Lin H."/>
            <person name="Quesada-Ocampo L."/>
            <person name="Vaillancourt B."/>
            <person name="Sakai H."/>
            <person name="Lee S.S."/>
            <person name="Kim J."/>
            <person name="Numa H."/>
            <person name="Itoh T."/>
            <person name="Buell C.R."/>
            <person name="Matsumoto T."/>
        </authorList>
    </citation>
    <scope>GENOME REANNOTATION</scope>
    <source>
        <strain>cv. Nipponbare</strain>
    </source>
</reference>
<reference key="5">
    <citation type="journal article" date="2005" name="PLoS Biol.">
        <title>The genomes of Oryza sativa: a history of duplications.</title>
        <authorList>
            <person name="Yu J."/>
            <person name="Wang J."/>
            <person name="Lin W."/>
            <person name="Li S."/>
            <person name="Li H."/>
            <person name="Zhou J."/>
            <person name="Ni P."/>
            <person name="Dong W."/>
            <person name="Hu S."/>
            <person name="Zeng C."/>
            <person name="Zhang J."/>
            <person name="Zhang Y."/>
            <person name="Li R."/>
            <person name="Xu Z."/>
            <person name="Li S."/>
            <person name="Li X."/>
            <person name="Zheng H."/>
            <person name="Cong L."/>
            <person name="Lin L."/>
            <person name="Yin J."/>
            <person name="Geng J."/>
            <person name="Li G."/>
            <person name="Shi J."/>
            <person name="Liu J."/>
            <person name="Lv H."/>
            <person name="Li J."/>
            <person name="Wang J."/>
            <person name="Deng Y."/>
            <person name="Ran L."/>
            <person name="Shi X."/>
            <person name="Wang X."/>
            <person name="Wu Q."/>
            <person name="Li C."/>
            <person name="Ren X."/>
            <person name="Wang J."/>
            <person name="Wang X."/>
            <person name="Li D."/>
            <person name="Liu D."/>
            <person name="Zhang X."/>
            <person name="Ji Z."/>
            <person name="Zhao W."/>
            <person name="Sun Y."/>
            <person name="Zhang Z."/>
            <person name="Bao J."/>
            <person name="Han Y."/>
            <person name="Dong L."/>
            <person name="Ji J."/>
            <person name="Chen P."/>
            <person name="Wu S."/>
            <person name="Liu J."/>
            <person name="Xiao Y."/>
            <person name="Bu D."/>
            <person name="Tan J."/>
            <person name="Yang L."/>
            <person name="Ye C."/>
            <person name="Zhang J."/>
            <person name="Xu J."/>
            <person name="Zhou Y."/>
            <person name="Yu Y."/>
            <person name="Zhang B."/>
            <person name="Zhuang S."/>
            <person name="Wei H."/>
            <person name="Liu B."/>
            <person name="Lei M."/>
            <person name="Yu H."/>
            <person name="Li Y."/>
            <person name="Xu H."/>
            <person name="Wei S."/>
            <person name="He X."/>
            <person name="Fang L."/>
            <person name="Zhang Z."/>
            <person name="Zhang Y."/>
            <person name="Huang X."/>
            <person name="Su Z."/>
            <person name="Tong W."/>
            <person name="Li J."/>
            <person name="Tong Z."/>
            <person name="Li S."/>
            <person name="Ye J."/>
            <person name="Wang L."/>
            <person name="Fang L."/>
            <person name="Lei T."/>
            <person name="Chen C.-S."/>
            <person name="Chen H.-C."/>
            <person name="Xu Z."/>
            <person name="Li H."/>
            <person name="Huang H."/>
            <person name="Zhang F."/>
            <person name="Xu H."/>
            <person name="Li N."/>
            <person name="Zhao C."/>
            <person name="Li S."/>
            <person name="Dong L."/>
            <person name="Huang Y."/>
            <person name="Li L."/>
            <person name="Xi Y."/>
            <person name="Qi Q."/>
            <person name="Li W."/>
            <person name="Zhang B."/>
            <person name="Hu W."/>
            <person name="Zhang Y."/>
            <person name="Tian X."/>
            <person name="Jiao Y."/>
            <person name="Liang X."/>
            <person name="Jin J."/>
            <person name="Gao L."/>
            <person name="Zheng W."/>
            <person name="Hao B."/>
            <person name="Liu S.-M."/>
            <person name="Wang W."/>
            <person name="Yuan L."/>
            <person name="Cao M."/>
            <person name="McDermott J."/>
            <person name="Samudrala R."/>
            <person name="Wang J."/>
            <person name="Wong G.K.-S."/>
            <person name="Yang H."/>
        </authorList>
    </citation>
    <scope>NUCLEOTIDE SEQUENCE [LARGE SCALE GENOMIC DNA]</scope>
    <source>
        <strain>cv. Nipponbare</strain>
    </source>
</reference>
<reference key="6">
    <citation type="journal article" date="2003" name="Science">
        <title>Collection, mapping, and annotation of over 28,000 cDNA clones from japonica rice.</title>
        <authorList>
            <consortium name="The rice full-length cDNA consortium"/>
        </authorList>
    </citation>
    <scope>NUCLEOTIDE SEQUENCE [LARGE SCALE MRNA]</scope>
    <source>
        <strain>cv. Nipponbare</strain>
    </source>
</reference>
<reference key="7">
    <citation type="journal article" date="2012" name="BMC Plant Biol.">
        <title>The SLEEPER genes: a transposase-derived angiosperm-specific gene family.</title>
        <authorList>
            <person name="Knip M."/>
            <person name="de Pater S."/>
            <person name="Hooykaas P.J."/>
        </authorList>
    </citation>
    <scope>FUNCTION</scope>
</reference>
<dbReference type="EMBL" id="AP004222">
    <property type="status" value="NOT_ANNOTATED_CDS"/>
    <property type="molecule type" value="Genomic_DNA"/>
</dbReference>
<dbReference type="EMBL" id="AP008207">
    <property type="protein sequence ID" value="BAF05116.2"/>
    <property type="status" value="ALT_INIT"/>
    <property type="molecule type" value="Genomic_DNA"/>
</dbReference>
<dbReference type="EMBL" id="AP014957">
    <property type="protein sequence ID" value="BAS72429.1"/>
    <property type="molecule type" value="Genomic_DNA"/>
</dbReference>
<dbReference type="EMBL" id="CM000138">
    <property type="protein sequence ID" value="EAZ12126.1"/>
    <property type="molecule type" value="Genomic_DNA"/>
</dbReference>
<dbReference type="EMBL" id="AK069603">
    <property type="status" value="NOT_ANNOTATED_CDS"/>
    <property type="molecule type" value="mRNA"/>
</dbReference>
<dbReference type="RefSeq" id="XP_015621812.1">
    <property type="nucleotide sequence ID" value="XM_015766326.1"/>
</dbReference>
<dbReference type="RefSeq" id="XP_015621813.1">
    <property type="nucleotide sequence ID" value="XM_015766327.1"/>
</dbReference>
<dbReference type="FunCoup" id="Q0JMB2">
    <property type="interactions" value="1533"/>
</dbReference>
<dbReference type="STRING" id="39947.Q0JMB2"/>
<dbReference type="PaxDb" id="39947-Q0JMB2"/>
<dbReference type="EnsemblPlants" id="Os01t0518400-01">
    <property type="protein sequence ID" value="Os01t0518400-01"/>
    <property type="gene ID" value="Os01g0518400"/>
</dbReference>
<dbReference type="Gramene" id="Os01t0518400-01">
    <property type="protein sequence ID" value="Os01t0518400-01"/>
    <property type="gene ID" value="Os01g0518400"/>
</dbReference>
<dbReference type="KEGG" id="dosa:Os01g0518400"/>
<dbReference type="eggNOG" id="KOG1121">
    <property type="taxonomic scope" value="Eukaryota"/>
</dbReference>
<dbReference type="HOGENOM" id="CLU_009123_1_2_1"/>
<dbReference type="InParanoid" id="Q0JMB2"/>
<dbReference type="OMA" id="MIHSNEM"/>
<dbReference type="OrthoDB" id="2610923at2759"/>
<dbReference type="Proteomes" id="UP000000763">
    <property type="component" value="Chromosome 1"/>
</dbReference>
<dbReference type="Proteomes" id="UP000007752">
    <property type="component" value="Chromosome 1"/>
</dbReference>
<dbReference type="Proteomes" id="UP000059680">
    <property type="component" value="Chromosome 1"/>
</dbReference>
<dbReference type="GO" id="GO:0005634">
    <property type="term" value="C:nucleus"/>
    <property type="evidence" value="ECO:0007669"/>
    <property type="project" value="UniProtKB-SubCell"/>
</dbReference>
<dbReference type="GO" id="GO:0003677">
    <property type="term" value="F:DNA binding"/>
    <property type="evidence" value="ECO:0007669"/>
    <property type="project" value="UniProtKB-KW"/>
</dbReference>
<dbReference type="GO" id="GO:0046983">
    <property type="term" value="F:protein dimerization activity"/>
    <property type="evidence" value="ECO:0007669"/>
    <property type="project" value="InterPro"/>
</dbReference>
<dbReference type="GO" id="GO:0008270">
    <property type="term" value="F:zinc ion binding"/>
    <property type="evidence" value="ECO:0007669"/>
    <property type="project" value="UniProtKB-KW"/>
</dbReference>
<dbReference type="GO" id="GO:0009791">
    <property type="term" value="P:post-embryonic development"/>
    <property type="evidence" value="ECO:0000304"/>
    <property type="project" value="UniProtKB"/>
</dbReference>
<dbReference type="InterPro" id="IPR025525">
    <property type="entry name" value="hAT-like_transposase_RNase-H"/>
</dbReference>
<dbReference type="InterPro" id="IPR008906">
    <property type="entry name" value="HATC_C_dom"/>
</dbReference>
<dbReference type="InterPro" id="IPR012337">
    <property type="entry name" value="RNaseH-like_sf"/>
</dbReference>
<dbReference type="InterPro" id="IPR003656">
    <property type="entry name" value="Znf_BED"/>
</dbReference>
<dbReference type="InterPro" id="IPR052035">
    <property type="entry name" value="ZnF_BED_domain_contain"/>
</dbReference>
<dbReference type="InterPro" id="IPR036236">
    <property type="entry name" value="Znf_C2H2_sf"/>
</dbReference>
<dbReference type="PANTHER" id="PTHR46481:SF10">
    <property type="entry name" value="ZINC FINGER BED DOMAIN-CONTAINING PROTEIN 39"/>
    <property type="match status" value="1"/>
</dbReference>
<dbReference type="PANTHER" id="PTHR46481">
    <property type="entry name" value="ZINC FINGER BED DOMAIN-CONTAINING PROTEIN 4"/>
    <property type="match status" value="1"/>
</dbReference>
<dbReference type="Pfam" id="PF05699">
    <property type="entry name" value="Dimer_Tnp_hAT"/>
    <property type="match status" value="1"/>
</dbReference>
<dbReference type="Pfam" id="PF14372">
    <property type="entry name" value="hAT-like_RNase-H"/>
    <property type="match status" value="1"/>
</dbReference>
<dbReference type="Pfam" id="PF02892">
    <property type="entry name" value="zf-BED"/>
    <property type="match status" value="1"/>
</dbReference>
<dbReference type="SMART" id="SM00614">
    <property type="entry name" value="ZnF_BED"/>
    <property type="match status" value="1"/>
</dbReference>
<dbReference type="SUPFAM" id="SSF57667">
    <property type="entry name" value="beta-beta-alpha zinc fingers"/>
    <property type="match status" value="1"/>
</dbReference>
<dbReference type="SUPFAM" id="SSF53098">
    <property type="entry name" value="Ribonuclease H-like"/>
    <property type="match status" value="1"/>
</dbReference>
<dbReference type="PROSITE" id="PS50808">
    <property type="entry name" value="ZF_BED"/>
    <property type="match status" value="1"/>
</dbReference>